<proteinExistence type="inferred from homology"/>
<evidence type="ECO:0000255" key="1">
    <source>
        <dbReference type="HAMAP-Rule" id="MF_00491"/>
    </source>
</evidence>
<sequence length="533" mass="57310">MQATVPWLSLSILVPIVGALLVPLVPDKGEGKQVRWYALIVTLITFLITVAAYLTGYDPSLSGLQLSERVSWLPDLGLTWAVGADGLSMPLILLTSFITSLACLAAWPVSFKPRLFYFLLLAMDGGQIAVFAVQDMLLFFLAWELELIPVYLLLAIWGGKKRQYAATKFILYTAGSSLFILLAALAMGFFGGGTPSFEYTALAAKDFGTGFQLLCYAGLLIAFGVKLPIVPLHTWLPDAHGEATAPVHMLLAGILLKMGGYALLRFNCELLPAAHSQFAPLLIVLGVVNIIYAALTSFAQRNLKRKIAYSSISHMGFVLIGVGSFSALGTSGAMLQMISHGLIGASLFFLVGATYDRTHTLQLDEMGGIGQKMRIMFALWTVCALASLALPGMSGFVSELMVFAGFATDEAYTLPFRVVICGLAAVGVILTPIYLLSMLREIFFGKEKEELVSHTNLVDAEPREVYIIGCLLVPIIGIGLYPKLMTDSYRSSIEALVSRNLGAMEQVISPTAPLIRGQAPVPAIIQAPAVGAS</sequence>
<keyword id="KW-0472">Membrane</keyword>
<keyword id="KW-0520">NAD</keyword>
<keyword id="KW-0521">NADP</keyword>
<keyword id="KW-0618">Plastoquinone</keyword>
<keyword id="KW-0874">Quinone</keyword>
<keyword id="KW-0793">Thylakoid</keyword>
<keyword id="KW-1278">Translocase</keyword>
<keyword id="KW-0812">Transmembrane</keyword>
<keyword id="KW-1133">Transmembrane helix</keyword>
<organism>
    <name type="scientific">Synechococcus sp. (strain CC9605)</name>
    <dbReference type="NCBI Taxonomy" id="110662"/>
    <lineage>
        <taxon>Bacteria</taxon>
        <taxon>Bacillati</taxon>
        <taxon>Cyanobacteriota</taxon>
        <taxon>Cyanophyceae</taxon>
        <taxon>Synechococcales</taxon>
        <taxon>Synechococcaceae</taxon>
        <taxon>Synechococcus</taxon>
    </lineage>
</organism>
<name>NU4C_SYNSC</name>
<dbReference type="EC" id="7.1.1.-" evidence="1"/>
<dbReference type="EMBL" id="CP000110">
    <property type="protein sequence ID" value="ABB36133.1"/>
    <property type="molecule type" value="Genomic_DNA"/>
</dbReference>
<dbReference type="SMR" id="Q3AGZ9"/>
<dbReference type="STRING" id="110662.Syncc9605_2401"/>
<dbReference type="KEGG" id="syd:Syncc9605_2401"/>
<dbReference type="eggNOG" id="COG1008">
    <property type="taxonomic scope" value="Bacteria"/>
</dbReference>
<dbReference type="HOGENOM" id="CLU_007100_4_0_3"/>
<dbReference type="GO" id="GO:0031676">
    <property type="term" value="C:plasma membrane-derived thylakoid membrane"/>
    <property type="evidence" value="ECO:0007669"/>
    <property type="project" value="UniProtKB-SubCell"/>
</dbReference>
<dbReference type="GO" id="GO:0008137">
    <property type="term" value="F:NADH dehydrogenase (ubiquinone) activity"/>
    <property type="evidence" value="ECO:0007669"/>
    <property type="project" value="InterPro"/>
</dbReference>
<dbReference type="GO" id="GO:0048039">
    <property type="term" value="F:ubiquinone binding"/>
    <property type="evidence" value="ECO:0007669"/>
    <property type="project" value="TreeGrafter"/>
</dbReference>
<dbReference type="GO" id="GO:0042773">
    <property type="term" value="P:ATP synthesis coupled electron transport"/>
    <property type="evidence" value="ECO:0007669"/>
    <property type="project" value="InterPro"/>
</dbReference>
<dbReference type="GO" id="GO:0015990">
    <property type="term" value="P:electron transport coupled proton transport"/>
    <property type="evidence" value="ECO:0007669"/>
    <property type="project" value="TreeGrafter"/>
</dbReference>
<dbReference type="HAMAP" id="MF_00491">
    <property type="entry name" value="NDH1_NuoM"/>
    <property type="match status" value="1"/>
</dbReference>
<dbReference type="InterPro" id="IPR022997">
    <property type="entry name" value="NADH_Q_OxRdtase_chain4"/>
</dbReference>
<dbReference type="InterPro" id="IPR010227">
    <property type="entry name" value="NADH_Q_OxRdtase_chainM/4"/>
</dbReference>
<dbReference type="InterPro" id="IPR003918">
    <property type="entry name" value="NADH_UbQ_OxRdtase"/>
</dbReference>
<dbReference type="InterPro" id="IPR001750">
    <property type="entry name" value="ND/Mrp_TM"/>
</dbReference>
<dbReference type="NCBIfam" id="TIGR01972">
    <property type="entry name" value="NDH_I_M"/>
    <property type="match status" value="1"/>
</dbReference>
<dbReference type="NCBIfam" id="NF002713">
    <property type="entry name" value="PRK02546.1"/>
    <property type="match status" value="1"/>
</dbReference>
<dbReference type="NCBIfam" id="NF009212">
    <property type="entry name" value="PRK12561.1"/>
    <property type="match status" value="1"/>
</dbReference>
<dbReference type="PANTHER" id="PTHR43507:SF21">
    <property type="entry name" value="NAD(P)H-QUINONE OXIDOREDUCTASE CHAIN 4, CHLOROPLASTIC"/>
    <property type="match status" value="1"/>
</dbReference>
<dbReference type="PANTHER" id="PTHR43507">
    <property type="entry name" value="NADH-UBIQUINONE OXIDOREDUCTASE CHAIN 4"/>
    <property type="match status" value="1"/>
</dbReference>
<dbReference type="Pfam" id="PF00361">
    <property type="entry name" value="Proton_antipo_M"/>
    <property type="match status" value="1"/>
</dbReference>
<dbReference type="PRINTS" id="PR01437">
    <property type="entry name" value="NUOXDRDTASE4"/>
</dbReference>
<reference key="1">
    <citation type="submission" date="2005-07" db="EMBL/GenBank/DDBJ databases">
        <title>Complete sequence of Synechococcus sp. CC9605.</title>
        <authorList>
            <consortium name="US DOE Joint Genome Institute"/>
            <person name="Copeland A."/>
            <person name="Lucas S."/>
            <person name="Lapidus A."/>
            <person name="Barry K."/>
            <person name="Detter J.C."/>
            <person name="Glavina T."/>
            <person name="Hammon N."/>
            <person name="Israni S."/>
            <person name="Pitluck S."/>
            <person name="Schmutz J."/>
            <person name="Martinez M."/>
            <person name="Larimer F."/>
            <person name="Land M."/>
            <person name="Kyrpides N."/>
            <person name="Ivanova N."/>
            <person name="Richardson P."/>
        </authorList>
    </citation>
    <scope>NUCLEOTIDE SEQUENCE [LARGE SCALE GENOMIC DNA]</scope>
    <source>
        <strain>CC9605</strain>
    </source>
</reference>
<gene>
    <name evidence="1" type="primary">ndhD</name>
    <name type="ordered locus">Syncc9605_2401</name>
</gene>
<protein>
    <recommendedName>
        <fullName evidence="1">NAD(P)H-quinone oxidoreductase chain 4</fullName>
        <ecNumber evidence="1">7.1.1.-</ecNumber>
    </recommendedName>
    <alternativeName>
        <fullName evidence="1">NAD(P)H dehydrogenase I, chain 4</fullName>
    </alternativeName>
    <alternativeName>
        <fullName evidence="1">NDH-1, chain 4</fullName>
    </alternativeName>
</protein>
<feature type="chain" id="PRO_0000343253" description="NAD(P)H-quinone oxidoreductase chain 4">
    <location>
        <begin position="1"/>
        <end position="533"/>
    </location>
</feature>
<feature type="transmembrane region" description="Helical" evidence="1">
    <location>
        <begin position="5"/>
        <end position="25"/>
    </location>
</feature>
<feature type="transmembrane region" description="Helical" evidence="1">
    <location>
        <begin position="36"/>
        <end position="56"/>
    </location>
</feature>
<feature type="transmembrane region" description="Helical" evidence="1">
    <location>
        <begin position="70"/>
        <end position="90"/>
    </location>
</feature>
<feature type="transmembrane region" description="Helical" evidence="1">
    <location>
        <begin position="91"/>
        <end position="111"/>
    </location>
</feature>
<feature type="transmembrane region" description="Helical" evidence="1">
    <location>
        <begin position="115"/>
        <end position="135"/>
    </location>
</feature>
<feature type="transmembrane region" description="Helical" evidence="1">
    <location>
        <begin position="137"/>
        <end position="157"/>
    </location>
</feature>
<feature type="transmembrane region" description="Helical" evidence="1">
    <location>
        <begin position="169"/>
        <end position="189"/>
    </location>
</feature>
<feature type="transmembrane region" description="Helical" evidence="1">
    <location>
        <begin position="210"/>
        <end position="230"/>
    </location>
</feature>
<feature type="transmembrane region" description="Helical" evidence="1">
    <location>
        <begin position="244"/>
        <end position="264"/>
    </location>
</feature>
<feature type="transmembrane region" description="Helical" evidence="1">
    <location>
        <begin position="278"/>
        <end position="298"/>
    </location>
</feature>
<feature type="transmembrane region" description="Helical" evidence="1">
    <location>
        <begin position="315"/>
        <end position="335"/>
    </location>
</feature>
<feature type="transmembrane region" description="Helical" evidence="1">
    <location>
        <begin position="336"/>
        <end position="356"/>
    </location>
</feature>
<feature type="transmembrane region" description="Helical" evidence="1">
    <location>
        <begin position="377"/>
        <end position="397"/>
    </location>
</feature>
<feature type="transmembrane region" description="Helical" evidence="1">
    <location>
        <begin position="418"/>
        <end position="438"/>
    </location>
</feature>
<feature type="transmembrane region" description="Helical" evidence="1">
    <location>
        <begin position="465"/>
        <end position="485"/>
    </location>
</feature>
<comment type="function">
    <text evidence="1">NDH-1 shuttles electrons from NAD(P)H, via FMN and iron-sulfur (Fe-S) centers, to quinones in the respiratory chain. The immediate electron acceptor for the enzyme in this species is believed to be plastoquinone. Couples the redox reaction to proton translocation (for every two electrons transferred, four hydrogen ions are translocated across the cytoplasmic membrane), and thus conserves the redox energy in a proton gradient.</text>
</comment>
<comment type="catalytic activity">
    <reaction evidence="1">
        <text>a plastoquinone + NADH + (n+1) H(+)(in) = a plastoquinol + NAD(+) + n H(+)(out)</text>
        <dbReference type="Rhea" id="RHEA:42608"/>
        <dbReference type="Rhea" id="RHEA-COMP:9561"/>
        <dbReference type="Rhea" id="RHEA-COMP:9562"/>
        <dbReference type="ChEBI" id="CHEBI:15378"/>
        <dbReference type="ChEBI" id="CHEBI:17757"/>
        <dbReference type="ChEBI" id="CHEBI:57540"/>
        <dbReference type="ChEBI" id="CHEBI:57945"/>
        <dbReference type="ChEBI" id="CHEBI:62192"/>
    </reaction>
</comment>
<comment type="catalytic activity">
    <reaction evidence="1">
        <text>a plastoquinone + NADPH + (n+1) H(+)(in) = a plastoquinol + NADP(+) + n H(+)(out)</text>
        <dbReference type="Rhea" id="RHEA:42612"/>
        <dbReference type="Rhea" id="RHEA-COMP:9561"/>
        <dbReference type="Rhea" id="RHEA-COMP:9562"/>
        <dbReference type="ChEBI" id="CHEBI:15378"/>
        <dbReference type="ChEBI" id="CHEBI:17757"/>
        <dbReference type="ChEBI" id="CHEBI:57783"/>
        <dbReference type="ChEBI" id="CHEBI:58349"/>
        <dbReference type="ChEBI" id="CHEBI:62192"/>
    </reaction>
</comment>
<comment type="subcellular location">
    <subcellularLocation>
        <location evidence="1">Cellular thylakoid membrane</location>
        <topology evidence="1">Multi-pass membrane protein</topology>
    </subcellularLocation>
</comment>
<comment type="similarity">
    <text evidence="1">Belongs to the complex I subunit 4 family.</text>
</comment>
<accession>Q3AGZ9</accession>